<protein>
    <recommendedName>
        <fullName evidence="1">Ribonuclease HIII</fullName>
        <shortName evidence="1">RNase HIII</shortName>
        <ecNumber evidence="1">3.1.26.4</ecNumber>
    </recommendedName>
</protein>
<gene>
    <name evidence="1" type="primary">rnhC</name>
    <name type="ordered locus">SMU_1873</name>
</gene>
<name>RNH3_STRMU</name>
<proteinExistence type="inferred from homology"/>
<feature type="chain" id="PRO_1000031241" description="Ribonuclease HIII">
    <location>
        <begin position="1"/>
        <end position="303"/>
    </location>
</feature>
<feature type="domain" description="RNase H type-2" evidence="2">
    <location>
        <begin position="85"/>
        <end position="302"/>
    </location>
</feature>
<feature type="binding site" evidence="1">
    <location>
        <position position="91"/>
    </location>
    <ligand>
        <name>a divalent metal cation</name>
        <dbReference type="ChEBI" id="CHEBI:60240"/>
    </ligand>
</feature>
<feature type="binding site" evidence="1">
    <location>
        <position position="92"/>
    </location>
    <ligand>
        <name>a divalent metal cation</name>
        <dbReference type="ChEBI" id="CHEBI:60240"/>
    </ligand>
</feature>
<feature type="binding site" evidence="1">
    <location>
        <position position="196"/>
    </location>
    <ligand>
        <name>a divalent metal cation</name>
        <dbReference type="ChEBI" id="CHEBI:60240"/>
    </ligand>
</feature>
<comment type="function">
    <text evidence="1">Endonuclease that specifically degrades the RNA of RNA-DNA hybrids.</text>
</comment>
<comment type="catalytic activity">
    <reaction evidence="1">
        <text>Endonucleolytic cleavage to 5'-phosphomonoester.</text>
        <dbReference type="EC" id="3.1.26.4"/>
    </reaction>
</comment>
<comment type="cofactor">
    <cofactor evidence="1">
        <name>Mn(2+)</name>
        <dbReference type="ChEBI" id="CHEBI:29035"/>
    </cofactor>
    <cofactor evidence="1">
        <name>Mg(2+)</name>
        <dbReference type="ChEBI" id="CHEBI:18420"/>
    </cofactor>
    <text evidence="1">Manganese or magnesium. Binds 1 divalent metal ion per monomer in the absence of substrate. May bind a second metal ion after substrate binding.</text>
</comment>
<comment type="subcellular location">
    <subcellularLocation>
        <location evidence="1">Cytoplasm</location>
    </subcellularLocation>
</comment>
<comment type="similarity">
    <text evidence="1">Belongs to the RNase HII family. RnhC subfamily.</text>
</comment>
<evidence type="ECO:0000255" key="1">
    <source>
        <dbReference type="HAMAP-Rule" id="MF_00053"/>
    </source>
</evidence>
<evidence type="ECO:0000255" key="2">
    <source>
        <dbReference type="PROSITE-ProRule" id="PRU01319"/>
    </source>
</evidence>
<reference key="1">
    <citation type="journal article" date="2002" name="Proc. Natl. Acad. Sci. U.S.A.">
        <title>Genome sequence of Streptococcus mutans UA159, a cariogenic dental pathogen.</title>
        <authorList>
            <person name="Ajdic D.J."/>
            <person name="McShan W.M."/>
            <person name="McLaughlin R.E."/>
            <person name="Savic G."/>
            <person name="Chang J."/>
            <person name="Carson M.B."/>
            <person name="Primeaux C."/>
            <person name="Tian R."/>
            <person name="Kenton S."/>
            <person name="Jia H.G."/>
            <person name="Lin S.P."/>
            <person name="Qian Y."/>
            <person name="Li S."/>
            <person name="Zhu H."/>
            <person name="Najar F.Z."/>
            <person name="Lai H."/>
            <person name="White J."/>
            <person name="Roe B.A."/>
            <person name="Ferretti J.J."/>
        </authorList>
    </citation>
    <scope>NUCLEOTIDE SEQUENCE [LARGE SCALE GENOMIC DNA]</scope>
    <source>
        <strain>ATCC 700610 / UA159</strain>
    </source>
</reference>
<accession>Q8DSC8</accession>
<keyword id="KW-0963">Cytoplasm</keyword>
<keyword id="KW-0255">Endonuclease</keyword>
<keyword id="KW-0378">Hydrolase</keyword>
<keyword id="KW-0460">Magnesium</keyword>
<keyword id="KW-0479">Metal-binding</keyword>
<keyword id="KW-0540">Nuclease</keyword>
<keyword id="KW-1185">Reference proteome</keyword>
<sequence length="303" mass="33831">MNTFVLQLDEETIQHLIQTLKEYQVQNANPYIRFAAKFKQATILIYASRKVVFQGKNASAVAQELGYKPVVHKSNQDNIKNKQDCSLIGSDEVGNGSYFGGLAVVASFVKQADHAFLKELGVDDSKNLTDVKIKQIAPLLEAKLPHKALLLSPQKYNEVVGDNKLHNAVSVKVALHNQAIFLLLQEGWQPDKIVIDAFTSPKNYQKYLKNENNRFSNPLTLEERAEGKYLAVAVSSIIARKLFLDNLDELSQKVGFNLPSGAGQQSDKIASQILKTYGELGLETTAKLHFKNTKKAYQLLKKE</sequence>
<organism>
    <name type="scientific">Streptococcus mutans serotype c (strain ATCC 700610 / UA159)</name>
    <dbReference type="NCBI Taxonomy" id="210007"/>
    <lineage>
        <taxon>Bacteria</taxon>
        <taxon>Bacillati</taxon>
        <taxon>Bacillota</taxon>
        <taxon>Bacilli</taxon>
        <taxon>Lactobacillales</taxon>
        <taxon>Streptococcaceae</taxon>
        <taxon>Streptococcus</taxon>
    </lineage>
</organism>
<dbReference type="EC" id="3.1.26.4" evidence="1"/>
<dbReference type="EMBL" id="AE014133">
    <property type="protein sequence ID" value="AAN59490.1"/>
    <property type="molecule type" value="Genomic_DNA"/>
</dbReference>
<dbReference type="RefSeq" id="NP_722184.1">
    <property type="nucleotide sequence ID" value="NC_004350.2"/>
</dbReference>
<dbReference type="RefSeq" id="WP_002271343.1">
    <property type="nucleotide sequence ID" value="NC_004350.2"/>
</dbReference>
<dbReference type="SMR" id="Q8DSC8"/>
<dbReference type="STRING" id="210007.SMU_1873"/>
<dbReference type="KEGG" id="smu:SMU_1873"/>
<dbReference type="PATRIC" id="fig|210007.7.peg.1669"/>
<dbReference type="eggNOG" id="COG1039">
    <property type="taxonomic scope" value="Bacteria"/>
</dbReference>
<dbReference type="HOGENOM" id="CLU_059546_1_0_9"/>
<dbReference type="OrthoDB" id="9777935at2"/>
<dbReference type="PhylomeDB" id="Q8DSC8"/>
<dbReference type="Proteomes" id="UP000002512">
    <property type="component" value="Chromosome"/>
</dbReference>
<dbReference type="GO" id="GO:0005737">
    <property type="term" value="C:cytoplasm"/>
    <property type="evidence" value="ECO:0007669"/>
    <property type="project" value="UniProtKB-SubCell"/>
</dbReference>
<dbReference type="GO" id="GO:0032299">
    <property type="term" value="C:ribonuclease H2 complex"/>
    <property type="evidence" value="ECO:0007669"/>
    <property type="project" value="TreeGrafter"/>
</dbReference>
<dbReference type="GO" id="GO:0000287">
    <property type="term" value="F:magnesium ion binding"/>
    <property type="evidence" value="ECO:0007669"/>
    <property type="project" value="UniProtKB-UniRule"/>
</dbReference>
<dbReference type="GO" id="GO:0003723">
    <property type="term" value="F:RNA binding"/>
    <property type="evidence" value="ECO:0007669"/>
    <property type="project" value="InterPro"/>
</dbReference>
<dbReference type="GO" id="GO:0004523">
    <property type="term" value="F:RNA-DNA hybrid ribonuclease activity"/>
    <property type="evidence" value="ECO:0007669"/>
    <property type="project" value="UniProtKB-UniRule"/>
</dbReference>
<dbReference type="GO" id="GO:0043137">
    <property type="term" value="P:DNA replication, removal of RNA primer"/>
    <property type="evidence" value="ECO:0007669"/>
    <property type="project" value="TreeGrafter"/>
</dbReference>
<dbReference type="GO" id="GO:0006298">
    <property type="term" value="P:mismatch repair"/>
    <property type="evidence" value="ECO:0007669"/>
    <property type="project" value="TreeGrafter"/>
</dbReference>
<dbReference type="CDD" id="cd06590">
    <property type="entry name" value="RNase_HII_bacteria_HIII_like"/>
    <property type="match status" value="1"/>
</dbReference>
<dbReference type="CDD" id="cd14796">
    <property type="entry name" value="RNAse_HIII_N"/>
    <property type="match status" value="1"/>
</dbReference>
<dbReference type="FunFam" id="3.30.420.10:FF:000047">
    <property type="entry name" value="Ribonuclease HIII"/>
    <property type="match status" value="1"/>
</dbReference>
<dbReference type="Gene3D" id="3.30.420.10">
    <property type="entry name" value="Ribonuclease H-like superfamily/Ribonuclease H"/>
    <property type="match status" value="1"/>
</dbReference>
<dbReference type="Gene3D" id="3.30.310.10">
    <property type="entry name" value="TATA-Binding Protein"/>
    <property type="match status" value="1"/>
</dbReference>
<dbReference type="HAMAP" id="MF_00053">
    <property type="entry name" value="RNase_HIII"/>
    <property type="match status" value="1"/>
</dbReference>
<dbReference type="InterPro" id="IPR001352">
    <property type="entry name" value="RNase_HII/HIII"/>
</dbReference>
<dbReference type="InterPro" id="IPR024567">
    <property type="entry name" value="RNase_HII/HIII_dom"/>
</dbReference>
<dbReference type="InterPro" id="IPR004641">
    <property type="entry name" value="RNase_HIII"/>
</dbReference>
<dbReference type="InterPro" id="IPR024568">
    <property type="entry name" value="RNase_HIII_N"/>
</dbReference>
<dbReference type="InterPro" id="IPR012337">
    <property type="entry name" value="RNaseH-like_sf"/>
</dbReference>
<dbReference type="InterPro" id="IPR036397">
    <property type="entry name" value="RNaseH_sf"/>
</dbReference>
<dbReference type="InterPro" id="IPR012295">
    <property type="entry name" value="TBP_dom_sf"/>
</dbReference>
<dbReference type="NCBIfam" id="TIGR00716">
    <property type="entry name" value="rnhC"/>
    <property type="match status" value="1"/>
</dbReference>
<dbReference type="PANTHER" id="PTHR10954:SF23">
    <property type="entry name" value="RIBONUCLEASE"/>
    <property type="match status" value="1"/>
</dbReference>
<dbReference type="PANTHER" id="PTHR10954">
    <property type="entry name" value="RIBONUCLEASE H2 SUBUNIT A"/>
    <property type="match status" value="1"/>
</dbReference>
<dbReference type="Pfam" id="PF11858">
    <property type="entry name" value="DUF3378"/>
    <property type="match status" value="1"/>
</dbReference>
<dbReference type="Pfam" id="PF01351">
    <property type="entry name" value="RNase_HII"/>
    <property type="match status" value="1"/>
</dbReference>
<dbReference type="PIRSF" id="PIRSF037748">
    <property type="entry name" value="RnhC"/>
    <property type="match status" value="1"/>
</dbReference>
<dbReference type="SUPFAM" id="SSF53098">
    <property type="entry name" value="Ribonuclease H-like"/>
    <property type="match status" value="1"/>
</dbReference>
<dbReference type="PROSITE" id="PS51975">
    <property type="entry name" value="RNASE_H_2"/>
    <property type="match status" value="1"/>
</dbReference>